<proteinExistence type="inferred from homology"/>
<keyword id="KW-0963">Cytoplasm</keyword>
<keyword id="KW-0378">Hydrolase</keyword>
<keyword id="KW-0694">RNA-binding</keyword>
<keyword id="KW-0820">tRNA-binding</keyword>
<name>DTD_LACGA</name>
<gene>
    <name evidence="1" type="primary">dtd</name>
    <name type="ordered locus">LGAS_0858</name>
</gene>
<reference key="1">
    <citation type="journal article" date="2006" name="Proc. Natl. Acad. Sci. U.S.A.">
        <title>Comparative genomics of the lactic acid bacteria.</title>
        <authorList>
            <person name="Makarova K.S."/>
            <person name="Slesarev A."/>
            <person name="Wolf Y.I."/>
            <person name="Sorokin A."/>
            <person name="Mirkin B."/>
            <person name="Koonin E.V."/>
            <person name="Pavlov A."/>
            <person name="Pavlova N."/>
            <person name="Karamychev V."/>
            <person name="Polouchine N."/>
            <person name="Shakhova V."/>
            <person name="Grigoriev I."/>
            <person name="Lou Y."/>
            <person name="Rohksar D."/>
            <person name="Lucas S."/>
            <person name="Huang K."/>
            <person name="Goodstein D.M."/>
            <person name="Hawkins T."/>
            <person name="Plengvidhya V."/>
            <person name="Welker D."/>
            <person name="Hughes J."/>
            <person name="Goh Y."/>
            <person name="Benson A."/>
            <person name="Baldwin K."/>
            <person name="Lee J.-H."/>
            <person name="Diaz-Muniz I."/>
            <person name="Dosti B."/>
            <person name="Smeianov V."/>
            <person name="Wechter W."/>
            <person name="Barabote R."/>
            <person name="Lorca G."/>
            <person name="Altermann E."/>
            <person name="Barrangou R."/>
            <person name="Ganesan B."/>
            <person name="Xie Y."/>
            <person name="Rawsthorne H."/>
            <person name="Tamir D."/>
            <person name="Parker C."/>
            <person name="Breidt F."/>
            <person name="Broadbent J.R."/>
            <person name="Hutkins R."/>
            <person name="O'Sullivan D."/>
            <person name="Steele J."/>
            <person name="Unlu G."/>
            <person name="Saier M.H. Jr."/>
            <person name="Klaenhammer T."/>
            <person name="Richardson P."/>
            <person name="Kozyavkin S."/>
            <person name="Weimer B.C."/>
            <person name="Mills D.A."/>
        </authorList>
    </citation>
    <scope>NUCLEOTIDE SEQUENCE [LARGE SCALE GENOMIC DNA]</scope>
    <source>
        <strain>ATCC 33323 / DSM 20243 / BCRC 14619 / CIP 102991 / JCM 1131 / KCTC 3163 / NCIMB 11718 / NCTC 13722 / AM63</strain>
    </source>
</reference>
<comment type="function">
    <text evidence="1">An aminoacyl-tRNA editing enzyme that deacylates mischarged D-aminoacyl-tRNAs. Also deacylates mischarged glycyl-tRNA(Ala), protecting cells against glycine mischarging by AlaRS. Acts via tRNA-based rather than protein-based catalysis; rejects L-amino acids rather than detecting D-amino acids in the active site. By recycling D-aminoacyl-tRNA to D-amino acids and free tRNA molecules, this enzyme counteracts the toxicity associated with the formation of D-aminoacyl-tRNA entities in vivo and helps enforce protein L-homochirality.</text>
</comment>
<comment type="catalytic activity">
    <reaction evidence="1">
        <text>glycyl-tRNA(Ala) + H2O = tRNA(Ala) + glycine + H(+)</text>
        <dbReference type="Rhea" id="RHEA:53744"/>
        <dbReference type="Rhea" id="RHEA-COMP:9657"/>
        <dbReference type="Rhea" id="RHEA-COMP:13640"/>
        <dbReference type="ChEBI" id="CHEBI:15377"/>
        <dbReference type="ChEBI" id="CHEBI:15378"/>
        <dbReference type="ChEBI" id="CHEBI:57305"/>
        <dbReference type="ChEBI" id="CHEBI:78442"/>
        <dbReference type="ChEBI" id="CHEBI:78522"/>
        <dbReference type="EC" id="3.1.1.96"/>
    </reaction>
</comment>
<comment type="catalytic activity">
    <reaction evidence="1">
        <text>a D-aminoacyl-tRNA + H2O = a tRNA + a D-alpha-amino acid + H(+)</text>
        <dbReference type="Rhea" id="RHEA:13953"/>
        <dbReference type="Rhea" id="RHEA-COMP:10123"/>
        <dbReference type="Rhea" id="RHEA-COMP:10124"/>
        <dbReference type="ChEBI" id="CHEBI:15377"/>
        <dbReference type="ChEBI" id="CHEBI:15378"/>
        <dbReference type="ChEBI" id="CHEBI:59871"/>
        <dbReference type="ChEBI" id="CHEBI:78442"/>
        <dbReference type="ChEBI" id="CHEBI:79333"/>
        <dbReference type="EC" id="3.1.1.96"/>
    </reaction>
</comment>
<comment type="subunit">
    <text evidence="1">Homodimer.</text>
</comment>
<comment type="subcellular location">
    <subcellularLocation>
        <location evidence="1">Cytoplasm</location>
    </subcellularLocation>
</comment>
<comment type="domain">
    <text evidence="1">A Gly-cisPro motif from one monomer fits into the active site of the other monomer to allow specific chiral rejection of L-amino acids.</text>
</comment>
<comment type="similarity">
    <text evidence="1">Belongs to the DTD family.</text>
</comment>
<accession>Q043X5</accession>
<dbReference type="EC" id="3.1.1.96" evidence="1"/>
<dbReference type="EMBL" id="CP000413">
    <property type="protein sequence ID" value="ABJ60247.1"/>
    <property type="molecule type" value="Genomic_DNA"/>
</dbReference>
<dbReference type="RefSeq" id="WP_003647439.1">
    <property type="nucleotide sequence ID" value="NZ_WBMG01000010.1"/>
</dbReference>
<dbReference type="SMR" id="Q043X5"/>
<dbReference type="GeneID" id="29639894"/>
<dbReference type="KEGG" id="lga:LGAS_0858"/>
<dbReference type="HOGENOM" id="CLU_076901_1_0_9"/>
<dbReference type="BioCyc" id="LGAS324831:G1G6Y-851-MONOMER"/>
<dbReference type="Proteomes" id="UP000000664">
    <property type="component" value="Chromosome"/>
</dbReference>
<dbReference type="GO" id="GO:0005737">
    <property type="term" value="C:cytoplasm"/>
    <property type="evidence" value="ECO:0007669"/>
    <property type="project" value="UniProtKB-SubCell"/>
</dbReference>
<dbReference type="GO" id="GO:0051500">
    <property type="term" value="F:D-tyrosyl-tRNA(Tyr) deacylase activity"/>
    <property type="evidence" value="ECO:0007669"/>
    <property type="project" value="TreeGrafter"/>
</dbReference>
<dbReference type="GO" id="GO:0106026">
    <property type="term" value="F:Gly-tRNA(Ala) deacylase activity"/>
    <property type="evidence" value="ECO:0007669"/>
    <property type="project" value="UniProtKB-UniRule"/>
</dbReference>
<dbReference type="GO" id="GO:0043908">
    <property type="term" value="F:Ser(Gly)-tRNA(Ala) hydrolase activity"/>
    <property type="evidence" value="ECO:0007669"/>
    <property type="project" value="UniProtKB-UniRule"/>
</dbReference>
<dbReference type="GO" id="GO:0000049">
    <property type="term" value="F:tRNA binding"/>
    <property type="evidence" value="ECO:0007669"/>
    <property type="project" value="UniProtKB-UniRule"/>
</dbReference>
<dbReference type="GO" id="GO:0019478">
    <property type="term" value="P:D-amino acid catabolic process"/>
    <property type="evidence" value="ECO:0007669"/>
    <property type="project" value="UniProtKB-UniRule"/>
</dbReference>
<dbReference type="CDD" id="cd00563">
    <property type="entry name" value="Dtyr_deacylase"/>
    <property type="match status" value="1"/>
</dbReference>
<dbReference type="FunFam" id="3.50.80.10:FF:000001">
    <property type="entry name" value="D-aminoacyl-tRNA deacylase"/>
    <property type="match status" value="1"/>
</dbReference>
<dbReference type="Gene3D" id="3.50.80.10">
    <property type="entry name" value="D-tyrosyl-tRNA(Tyr) deacylase"/>
    <property type="match status" value="1"/>
</dbReference>
<dbReference type="HAMAP" id="MF_00518">
    <property type="entry name" value="Deacylase_Dtd"/>
    <property type="match status" value="1"/>
</dbReference>
<dbReference type="InterPro" id="IPR003732">
    <property type="entry name" value="Daa-tRNA_deacyls_DTD"/>
</dbReference>
<dbReference type="InterPro" id="IPR023509">
    <property type="entry name" value="DTD-like_sf"/>
</dbReference>
<dbReference type="NCBIfam" id="TIGR00256">
    <property type="entry name" value="D-aminoacyl-tRNA deacylase"/>
    <property type="match status" value="1"/>
</dbReference>
<dbReference type="PANTHER" id="PTHR10472:SF5">
    <property type="entry name" value="D-AMINOACYL-TRNA DEACYLASE 1"/>
    <property type="match status" value="1"/>
</dbReference>
<dbReference type="PANTHER" id="PTHR10472">
    <property type="entry name" value="D-TYROSYL-TRNA TYR DEACYLASE"/>
    <property type="match status" value="1"/>
</dbReference>
<dbReference type="Pfam" id="PF02580">
    <property type="entry name" value="Tyr_Deacylase"/>
    <property type="match status" value="1"/>
</dbReference>
<dbReference type="SUPFAM" id="SSF69500">
    <property type="entry name" value="DTD-like"/>
    <property type="match status" value="1"/>
</dbReference>
<organism>
    <name type="scientific">Lactobacillus gasseri (strain ATCC 33323 / DSM 20243 / BCRC 14619 / CIP 102991 / JCM 1131 / KCTC 3163 / NCIMB 11718 / NCTC 13722 / AM63)</name>
    <dbReference type="NCBI Taxonomy" id="324831"/>
    <lineage>
        <taxon>Bacteria</taxon>
        <taxon>Bacillati</taxon>
        <taxon>Bacillota</taxon>
        <taxon>Bacilli</taxon>
        <taxon>Lactobacillales</taxon>
        <taxon>Lactobacillaceae</taxon>
        <taxon>Lactobacillus</taxon>
    </lineage>
</organism>
<sequence>MRVVIQRVNKAQVTIDNEVVGKIKRGFLLLVGLREGDELDQVKKAASKIAKMRIFEDENGKTNLSLKDVNGEILSVSQFTLLANTKKGNRPSFVEAMRPPKSKELWEDFNQELENKDFHVETGEFGADMQVSLENDGPFTIVLDI</sequence>
<protein>
    <recommendedName>
        <fullName evidence="1">D-aminoacyl-tRNA deacylase</fullName>
        <shortName evidence="1">DTD</shortName>
        <ecNumber evidence="1">3.1.1.96</ecNumber>
    </recommendedName>
    <alternativeName>
        <fullName evidence="1">Gly-tRNA(Ala) deacylase</fullName>
    </alternativeName>
</protein>
<evidence type="ECO:0000255" key="1">
    <source>
        <dbReference type="HAMAP-Rule" id="MF_00518"/>
    </source>
</evidence>
<feature type="chain" id="PRO_1000050845" description="D-aminoacyl-tRNA deacylase">
    <location>
        <begin position="1"/>
        <end position="145"/>
    </location>
</feature>
<feature type="short sequence motif" description="Gly-cisPro motif, important for rejection of L-amino acids" evidence="1">
    <location>
        <begin position="137"/>
        <end position="138"/>
    </location>
</feature>